<evidence type="ECO:0000305" key="1"/>
<feature type="chain" id="PRO_0000215262" description="Ornatin-B">
    <location>
        <begin position="1"/>
        <end position="52"/>
    </location>
</feature>
<feature type="short sequence motif" description="Cell attachment site">
    <location>
        <begin position="42"/>
        <end position="44"/>
    </location>
</feature>
<reference key="1">
    <citation type="journal article" date="1991" name="Eur. J. Biochem.">
        <title>Ornatins: potent glycoprotein IIb-IIIa antagonists and platelet aggregation inhibitors from the leech Placobdella ornata.</title>
        <authorList>
            <person name="Mazur P."/>
            <person name="Henzel W.J."/>
            <person name="Seymour J.L."/>
            <person name="Lazarus R.A."/>
        </authorList>
    </citation>
    <scope>PROTEIN SEQUENCE</scope>
</reference>
<name>ORNB_PLAOR</name>
<protein>
    <recommendedName>
        <fullName>Ornatin-B</fullName>
    </recommendedName>
</protein>
<dbReference type="PIR" id="S19622">
    <property type="entry name" value="S19622"/>
</dbReference>
<dbReference type="SMR" id="P25511"/>
<dbReference type="GO" id="GO:0005576">
    <property type="term" value="C:extracellular region"/>
    <property type="evidence" value="ECO:0007669"/>
    <property type="project" value="UniProtKB-SubCell"/>
</dbReference>
<dbReference type="GO" id="GO:0007155">
    <property type="term" value="P:cell adhesion"/>
    <property type="evidence" value="ECO:0007669"/>
    <property type="project" value="UniProtKB-KW"/>
</dbReference>
<dbReference type="GO" id="GO:0030193">
    <property type="term" value="P:regulation of blood coagulation"/>
    <property type="evidence" value="ECO:0007669"/>
    <property type="project" value="InterPro"/>
</dbReference>
<dbReference type="InterPro" id="IPR002463">
    <property type="entry name" value="Ornatin"/>
</dbReference>
<dbReference type="Pfam" id="PF02088">
    <property type="entry name" value="Ornatin"/>
    <property type="match status" value="1"/>
</dbReference>
<dbReference type="PRINTS" id="PR01184">
    <property type="entry name" value="ORNATIN"/>
</dbReference>
<proteinExistence type="evidence at protein level"/>
<accession>P25511</accession>
<comment type="function">
    <text>Potent inhibitor of fibrinogen interaction with platelet receptors expressed on glycoprotein IIb-IIIa complex. May prevent blood from clotting during either feeding and/or storage of ingested blood.</text>
</comment>
<comment type="subcellular location">
    <subcellularLocation>
        <location>Secreted</location>
    </subcellularLocation>
</comment>
<comment type="similarity">
    <text evidence="1">Belongs to the ornatin family.</text>
</comment>
<keyword id="KW-0130">Cell adhesion</keyword>
<keyword id="KW-0903">Direct protein sequencing</keyword>
<keyword id="KW-0964">Secreted</keyword>
<sequence length="52" mass="5873">IYVRPTNDELNYCGDFRELGQPDKKCRCDGKPCTVGRCKFARGDNDDKCISA</sequence>
<organism>
    <name type="scientific">Placobdella ornata</name>
    <name type="common">Turtle leech</name>
    <dbReference type="NCBI Taxonomy" id="6415"/>
    <lineage>
        <taxon>Eukaryota</taxon>
        <taxon>Metazoa</taxon>
        <taxon>Spiralia</taxon>
        <taxon>Lophotrochozoa</taxon>
        <taxon>Annelida</taxon>
        <taxon>Clitellata</taxon>
        <taxon>Hirudinea</taxon>
        <taxon>Rhynchobdellida</taxon>
        <taxon>Glossiphoniidae</taxon>
        <taxon>Placobdella</taxon>
    </lineage>
</organism>